<accession>Q8CMN4</accession>
<reference key="1">
    <citation type="journal article" date="2003" name="Mol. Microbiol.">
        <title>Genome-based analysis of virulence genes in a non-biofilm-forming Staphylococcus epidermidis strain (ATCC 12228).</title>
        <authorList>
            <person name="Zhang Y.-Q."/>
            <person name="Ren S.-X."/>
            <person name="Li H.-L."/>
            <person name="Wang Y.-X."/>
            <person name="Fu G."/>
            <person name="Yang J."/>
            <person name="Qin Z.-Q."/>
            <person name="Miao Y.-G."/>
            <person name="Wang W.-Y."/>
            <person name="Chen R.-S."/>
            <person name="Shen Y."/>
            <person name="Chen Z."/>
            <person name="Yuan Z.-H."/>
            <person name="Zhao G.-P."/>
            <person name="Qu D."/>
            <person name="Danchin A."/>
            <person name="Wen Y.-M."/>
        </authorList>
    </citation>
    <scope>NUCLEOTIDE SEQUENCE [LARGE SCALE GENOMIC DNA]</scope>
    <source>
        <strain>ATCC 12228 / FDA PCI 1200</strain>
    </source>
</reference>
<evidence type="ECO:0000255" key="1">
    <source>
        <dbReference type="HAMAP-Rule" id="MF_00227"/>
    </source>
</evidence>
<comment type="function">
    <text evidence="1">RNaseP catalyzes the removal of the 5'-leader sequence from pre-tRNA to produce the mature 5'-terminus. It can also cleave other RNA substrates such as 4.5S RNA. The protein component plays an auxiliary but essential role in vivo by binding to the 5'-leader sequence and broadening the substrate specificity of the ribozyme.</text>
</comment>
<comment type="catalytic activity">
    <reaction evidence="1">
        <text>Endonucleolytic cleavage of RNA, removing 5'-extranucleotides from tRNA precursor.</text>
        <dbReference type="EC" id="3.1.26.5"/>
    </reaction>
</comment>
<comment type="subunit">
    <text evidence="1">Consists of a catalytic RNA component (M1 or rnpB) and a protein subunit.</text>
</comment>
<comment type="similarity">
    <text evidence="1">Belongs to the RnpA family.</text>
</comment>
<dbReference type="EC" id="3.1.26.5" evidence="1"/>
<dbReference type="EMBL" id="AE015929">
    <property type="protein sequence ID" value="AAO06061.1"/>
    <property type="molecule type" value="Genomic_DNA"/>
</dbReference>
<dbReference type="RefSeq" id="NP_765973.1">
    <property type="nucleotide sequence ID" value="NC_004461.1"/>
</dbReference>
<dbReference type="RefSeq" id="WP_001832522.1">
    <property type="nucleotide sequence ID" value="NZ_WBME01000012.1"/>
</dbReference>
<dbReference type="SMR" id="Q8CMN4"/>
<dbReference type="GeneID" id="50019723"/>
<dbReference type="KEGG" id="sep:SE_2418"/>
<dbReference type="PATRIC" id="fig|176280.10.peg.2357"/>
<dbReference type="eggNOG" id="COG0594">
    <property type="taxonomic scope" value="Bacteria"/>
</dbReference>
<dbReference type="HOGENOM" id="CLU_117179_9_1_9"/>
<dbReference type="OrthoDB" id="9810867at2"/>
<dbReference type="Proteomes" id="UP000001411">
    <property type="component" value="Chromosome"/>
</dbReference>
<dbReference type="GO" id="GO:0030677">
    <property type="term" value="C:ribonuclease P complex"/>
    <property type="evidence" value="ECO:0007669"/>
    <property type="project" value="TreeGrafter"/>
</dbReference>
<dbReference type="GO" id="GO:0042781">
    <property type="term" value="F:3'-tRNA processing endoribonuclease activity"/>
    <property type="evidence" value="ECO:0007669"/>
    <property type="project" value="TreeGrafter"/>
</dbReference>
<dbReference type="GO" id="GO:0004526">
    <property type="term" value="F:ribonuclease P activity"/>
    <property type="evidence" value="ECO:0007669"/>
    <property type="project" value="UniProtKB-UniRule"/>
</dbReference>
<dbReference type="GO" id="GO:0000049">
    <property type="term" value="F:tRNA binding"/>
    <property type="evidence" value="ECO:0007669"/>
    <property type="project" value="UniProtKB-UniRule"/>
</dbReference>
<dbReference type="GO" id="GO:0001682">
    <property type="term" value="P:tRNA 5'-leader removal"/>
    <property type="evidence" value="ECO:0007669"/>
    <property type="project" value="UniProtKB-UniRule"/>
</dbReference>
<dbReference type="FunFam" id="3.30.230.10:FF:000021">
    <property type="entry name" value="Ribonuclease P protein component"/>
    <property type="match status" value="1"/>
</dbReference>
<dbReference type="Gene3D" id="3.30.230.10">
    <property type="match status" value="1"/>
</dbReference>
<dbReference type="HAMAP" id="MF_00227">
    <property type="entry name" value="RNase_P"/>
    <property type="match status" value="1"/>
</dbReference>
<dbReference type="InterPro" id="IPR020568">
    <property type="entry name" value="Ribosomal_Su5_D2-typ_SF"/>
</dbReference>
<dbReference type="InterPro" id="IPR014721">
    <property type="entry name" value="Ribsml_uS5_D2-typ_fold_subgr"/>
</dbReference>
<dbReference type="InterPro" id="IPR000100">
    <property type="entry name" value="RNase_P"/>
</dbReference>
<dbReference type="InterPro" id="IPR020539">
    <property type="entry name" value="RNase_P_CS"/>
</dbReference>
<dbReference type="NCBIfam" id="TIGR00188">
    <property type="entry name" value="rnpA"/>
    <property type="match status" value="1"/>
</dbReference>
<dbReference type="PANTHER" id="PTHR33992">
    <property type="entry name" value="RIBONUCLEASE P PROTEIN COMPONENT"/>
    <property type="match status" value="1"/>
</dbReference>
<dbReference type="PANTHER" id="PTHR33992:SF1">
    <property type="entry name" value="RIBONUCLEASE P PROTEIN COMPONENT"/>
    <property type="match status" value="1"/>
</dbReference>
<dbReference type="Pfam" id="PF00825">
    <property type="entry name" value="Ribonuclease_P"/>
    <property type="match status" value="1"/>
</dbReference>
<dbReference type="SUPFAM" id="SSF54211">
    <property type="entry name" value="Ribosomal protein S5 domain 2-like"/>
    <property type="match status" value="1"/>
</dbReference>
<dbReference type="PROSITE" id="PS00648">
    <property type="entry name" value="RIBONUCLEASE_P"/>
    <property type="match status" value="1"/>
</dbReference>
<name>RNPA_STAES</name>
<feature type="chain" id="PRO_0000198532" description="Ribonuclease P protein component">
    <location>
        <begin position="1"/>
        <end position="115"/>
    </location>
</feature>
<organism>
    <name type="scientific">Staphylococcus epidermidis (strain ATCC 12228 / FDA PCI 1200)</name>
    <dbReference type="NCBI Taxonomy" id="176280"/>
    <lineage>
        <taxon>Bacteria</taxon>
        <taxon>Bacillati</taxon>
        <taxon>Bacillota</taxon>
        <taxon>Bacilli</taxon>
        <taxon>Bacillales</taxon>
        <taxon>Staphylococcaceae</taxon>
        <taxon>Staphylococcus</taxon>
    </lineage>
</organism>
<protein>
    <recommendedName>
        <fullName evidence="1">Ribonuclease P protein component</fullName>
        <shortName evidence="1">RNase P protein</shortName>
        <shortName evidence="1">RNaseP protein</shortName>
        <ecNumber evidence="1">3.1.26.5</ecNumber>
    </recommendedName>
    <alternativeName>
        <fullName evidence="1">Protein C5</fullName>
    </alternativeName>
</protein>
<keyword id="KW-0255">Endonuclease</keyword>
<keyword id="KW-0378">Hydrolase</keyword>
<keyword id="KW-0540">Nuclease</keyword>
<keyword id="KW-0694">RNA-binding</keyword>
<keyword id="KW-0819">tRNA processing</keyword>
<proteinExistence type="inferred from homology"/>
<sequence>MEKAYRIKRNSDFQAIYKNGKSVANRQFVVYTYKNRDLKHFRLGISVSKKLGNAVTRNRIKRAIRENFKVHKQNIIAKDIIVIARQPAKDMNTLEIQSSLEHVLKIAKVFNKKIK</sequence>
<gene>
    <name evidence="1" type="primary">rnpA</name>
    <name type="ordered locus">SE_2418</name>
</gene>